<proteinExistence type="inferred from homology"/>
<comment type="function">
    <text evidence="1">Involved in the synthesis of meso-diaminopimelate (m-DAP or DL-DAP), required for both lysine and peptidoglycan biosynthesis. Catalyzes the direct conversion of tetrahydrodipicolinate to LL-diaminopimelate.</text>
</comment>
<comment type="catalytic activity">
    <reaction evidence="1">
        <text>(2S,6S)-2,6-diaminopimelate + 2-oxoglutarate = (S)-2,3,4,5-tetrahydrodipicolinate + L-glutamate + H2O + H(+)</text>
        <dbReference type="Rhea" id="RHEA:23988"/>
        <dbReference type="ChEBI" id="CHEBI:15377"/>
        <dbReference type="ChEBI" id="CHEBI:15378"/>
        <dbReference type="ChEBI" id="CHEBI:16810"/>
        <dbReference type="ChEBI" id="CHEBI:16845"/>
        <dbReference type="ChEBI" id="CHEBI:29985"/>
        <dbReference type="ChEBI" id="CHEBI:57609"/>
        <dbReference type="EC" id="2.6.1.83"/>
    </reaction>
</comment>
<comment type="cofactor">
    <cofactor evidence="1">
        <name>pyridoxal 5'-phosphate</name>
        <dbReference type="ChEBI" id="CHEBI:597326"/>
    </cofactor>
</comment>
<comment type="pathway">
    <text evidence="1">Amino-acid biosynthesis; L-lysine biosynthesis via DAP pathway; LL-2,6-diaminopimelate from (S)-tetrahydrodipicolinate (aminotransferase route): step 1/1.</text>
</comment>
<comment type="subunit">
    <text evidence="1">Homodimer.</text>
</comment>
<comment type="similarity">
    <text evidence="1">Belongs to the class-I pyridoxal-phosphate-dependent aminotransferase family. LL-diaminopimelate aminotransferase subfamily.</text>
</comment>
<feature type="chain" id="PRO_0000312550" description="LL-diaminopimelate aminotransferase">
    <location>
        <begin position="1"/>
        <end position="411"/>
    </location>
</feature>
<feature type="binding site" evidence="1">
    <location>
        <position position="15"/>
    </location>
    <ligand>
        <name>substrate</name>
    </ligand>
</feature>
<feature type="binding site" evidence="1">
    <location>
        <position position="42"/>
    </location>
    <ligand>
        <name>substrate</name>
    </ligand>
</feature>
<feature type="binding site" evidence="1">
    <location>
        <position position="72"/>
    </location>
    <ligand>
        <name>pyridoxal 5'-phosphate</name>
        <dbReference type="ChEBI" id="CHEBI:597326"/>
    </ligand>
</feature>
<feature type="binding site" evidence="1">
    <location>
        <begin position="108"/>
        <end position="109"/>
    </location>
    <ligand>
        <name>pyridoxal 5'-phosphate</name>
        <dbReference type="ChEBI" id="CHEBI:597326"/>
    </ligand>
</feature>
<feature type="binding site" evidence="1">
    <location>
        <position position="109"/>
    </location>
    <ligand>
        <name>substrate</name>
    </ligand>
</feature>
<feature type="binding site" evidence="1">
    <location>
        <position position="132"/>
    </location>
    <ligand>
        <name>pyridoxal 5'-phosphate</name>
        <dbReference type="ChEBI" id="CHEBI:597326"/>
    </ligand>
</feature>
<feature type="binding site" evidence="1">
    <location>
        <position position="132"/>
    </location>
    <ligand>
        <name>substrate</name>
    </ligand>
</feature>
<feature type="binding site" evidence="1">
    <location>
        <position position="187"/>
    </location>
    <ligand>
        <name>pyridoxal 5'-phosphate</name>
        <dbReference type="ChEBI" id="CHEBI:597326"/>
    </ligand>
</feature>
<feature type="binding site" evidence="1">
    <location>
        <position position="187"/>
    </location>
    <ligand>
        <name>substrate</name>
    </ligand>
</feature>
<feature type="binding site" evidence="1">
    <location>
        <position position="218"/>
    </location>
    <ligand>
        <name>pyridoxal 5'-phosphate</name>
        <dbReference type="ChEBI" id="CHEBI:597326"/>
    </ligand>
</feature>
<feature type="binding site" evidence="1">
    <location>
        <begin position="246"/>
        <end position="248"/>
    </location>
    <ligand>
        <name>pyridoxal 5'-phosphate</name>
        <dbReference type="ChEBI" id="CHEBI:597326"/>
    </ligand>
</feature>
<feature type="binding site" evidence="1">
    <location>
        <position position="257"/>
    </location>
    <ligand>
        <name>pyridoxal 5'-phosphate</name>
        <dbReference type="ChEBI" id="CHEBI:597326"/>
    </ligand>
</feature>
<feature type="binding site" evidence="1">
    <location>
        <position position="292"/>
    </location>
    <ligand>
        <name>pyridoxal 5'-phosphate</name>
        <dbReference type="ChEBI" id="CHEBI:597326"/>
    </ligand>
</feature>
<feature type="binding site" evidence="1">
    <location>
        <position position="292"/>
    </location>
    <ligand>
        <name>substrate</name>
    </ligand>
</feature>
<feature type="binding site" evidence="1">
    <location>
        <position position="388"/>
    </location>
    <ligand>
        <name>substrate</name>
    </ligand>
</feature>
<feature type="modified residue" description="N6-(pyridoxal phosphate)lysine" evidence="1">
    <location>
        <position position="249"/>
    </location>
</feature>
<reference key="1">
    <citation type="submission" date="2005-08" db="EMBL/GenBank/DDBJ databases">
        <title>Complete sequence of chromosome 1 of Synechococcus elongatus PCC 7942.</title>
        <authorList>
            <consortium name="US DOE Joint Genome Institute"/>
            <person name="Copeland A."/>
            <person name="Lucas S."/>
            <person name="Lapidus A."/>
            <person name="Barry K."/>
            <person name="Detter J.C."/>
            <person name="Glavina T."/>
            <person name="Hammon N."/>
            <person name="Israni S."/>
            <person name="Pitluck S."/>
            <person name="Schmutz J."/>
            <person name="Larimer F."/>
            <person name="Land M."/>
            <person name="Kyrpides N."/>
            <person name="Lykidis A."/>
            <person name="Golden S."/>
            <person name="Richardson P."/>
        </authorList>
    </citation>
    <scope>NUCLEOTIDE SEQUENCE [LARGE SCALE GENOMIC DNA]</scope>
    <source>
        <strain>ATCC 33912 / PCC 7942 / FACHB-805</strain>
    </source>
</reference>
<keyword id="KW-0032">Aminotransferase</keyword>
<keyword id="KW-0663">Pyridoxal phosphate</keyword>
<keyword id="KW-1185">Reference proteome</keyword>
<keyword id="KW-0808">Transferase</keyword>
<name>DAPAT_SYNE7</name>
<evidence type="ECO:0000255" key="1">
    <source>
        <dbReference type="HAMAP-Rule" id="MF_01642"/>
    </source>
</evidence>
<dbReference type="EC" id="2.6.1.83" evidence="1"/>
<dbReference type="EMBL" id="CP000100">
    <property type="protein sequence ID" value="ABB56883.1"/>
    <property type="molecule type" value="Genomic_DNA"/>
</dbReference>
<dbReference type="RefSeq" id="WP_011242999.1">
    <property type="nucleotide sequence ID" value="NZ_JACJTX010000005.1"/>
</dbReference>
<dbReference type="SMR" id="Q31PY6"/>
<dbReference type="STRING" id="1140.Synpcc7942_0853"/>
<dbReference type="PaxDb" id="1140-Synpcc7942_0853"/>
<dbReference type="KEGG" id="syf:Synpcc7942_0853"/>
<dbReference type="eggNOG" id="COG0436">
    <property type="taxonomic scope" value="Bacteria"/>
</dbReference>
<dbReference type="HOGENOM" id="CLU_051433_0_0_3"/>
<dbReference type="OrthoDB" id="9802328at2"/>
<dbReference type="BioCyc" id="SYNEL:SYNPCC7942_0853-MONOMER"/>
<dbReference type="UniPathway" id="UPA00034">
    <property type="reaction ID" value="UER00466"/>
</dbReference>
<dbReference type="Proteomes" id="UP000889800">
    <property type="component" value="Chromosome"/>
</dbReference>
<dbReference type="GO" id="GO:0010285">
    <property type="term" value="F:L,L-diaminopimelate aminotransferase activity"/>
    <property type="evidence" value="ECO:0007669"/>
    <property type="project" value="UniProtKB-UniRule"/>
</dbReference>
<dbReference type="GO" id="GO:0030170">
    <property type="term" value="F:pyridoxal phosphate binding"/>
    <property type="evidence" value="ECO:0007669"/>
    <property type="project" value="UniProtKB-UniRule"/>
</dbReference>
<dbReference type="GO" id="GO:0033362">
    <property type="term" value="P:lysine biosynthetic process via diaminopimelate, diaminopimelate-aminotransferase pathway"/>
    <property type="evidence" value="ECO:0007669"/>
    <property type="project" value="UniProtKB-UniRule"/>
</dbReference>
<dbReference type="CDD" id="cd00609">
    <property type="entry name" value="AAT_like"/>
    <property type="match status" value="1"/>
</dbReference>
<dbReference type="FunFam" id="3.40.640.10:FF:000099">
    <property type="entry name" value="LL-diaminopimelate aminotransferase, chloroplastic"/>
    <property type="match status" value="1"/>
</dbReference>
<dbReference type="Gene3D" id="3.90.1150.10">
    <property type="entry name" value="Aspartate Aminotransferase, domain 1"/>
    <property type="match status" value="1"/>
</dbReference>
<dbReference type="Gene3D" id="3.40.640.10">
    <property type="entry name" value="Type I PLP-dependent aspartate aminotransferase-like (Major domain)"/>
    <property type="match status" value="1"/>
</dbReference>
<dbReference type="HAMAP" id="MF_01642">
    <property type="entry name" value="DapL_aminotrans_1"/>
    <property type="match status" value="1"/>
</dbReference>
<dbReference type="InterPro" id="IPR004839">
    <property type="entry name" value="Aminotransferase_I/II_large"/>
</dbReference>
<dbReference type="InterPro" id="IPR019942">
    <property type="entry name" value="DapL/ALD1"/>
</dbReference>
<dbReference type="InterPro" id="IPR015424">
    <property type="entry name" value="PyrdxlP-dep_Trfase"/>
</dbReference>
<dbReference type="InterPro" id="IPR015421">
    <property type="entry name" value="PyrdxlP-dep_Trfase_major"/>
</dbReference>
<dbReference type="InterPro" id="IPR015422">
    <property type="entry name" value="PyrdxlP-dep_Trfase_small"/>
</dbReference>
<dbReference type="NCBIfam" id="TIGR03542">
    <property type="entry name" value="DAPAT_plant"/>
    <property type="match status" value="1"/>
</dbReference>
<dbReference type="PANTHER" id="PTHR43144">
    <property type="entry name" value="AMINOTRANSFERASE"/>
    <property type="match status" value="1"/>
</dbReference>
<dbReference type="Pfam" id="PF00155">
    <property type="entry name" value="Aminotran_1_2"/>
    <property type="match status" value="1"/>
</dbReference>
<dbReference type="SUPFAM" id="SSF53383">
    <property type="entry name" value="PLP-dependent transferases"/>
    <property type="match status" value="1"/>
</dbReference>
<organism>
    <name type="scientific">Synechococcus elongatus (strain ATCC 33912 / PCC 7942 / FACHB-805)</name>
    <name type="common">Anacystis nidulans R2</name>
    <dbReference type="NCBI Taxonomy" id="1140"/>
    <lineage>
        <taxon>Bacteria</taxon>
        <taxon>Bacillati</taxon>
        <taxon>Cyanobacteriota</taxon>
        <taxon>Cyanophyceae</taxon>
        <taxon>Synechococcales</taxon>
        <taxon>Synechococcaceae</taxon>
        <taxon>Synechococcus</taxon>
    </lineage>
</organism>
<accession>Q31PY6</accession>
<gene>
    <name evidence="1" type="primary">dapL</name>
    <name type="ordered locus">Synpcc7942_0853</name>
</gene>
<sequence length="411" mass="44846">MATINDNYLKLKAGYLFPEIARRVNAFAQSNPEAAIIRLGIGDVTEPLPVACRQAMIQAVEDMGQRENFKGYGPEQGYAWLREKIAAHDFQSRGCEVDASEIFISDGSKCDCGNILDIFGNNNRIAVTDPVYPVYVDTNVMAGHTGDANDRGEYDGLVYLPISAENNFTAEIPSEKVDLIYLCFPNNPTGAVASREYLQAWVDYARANGAIILFDAAYEAFITDPAIPHSIFEIPGARDCAIEFRSFSKNAGFTGTRCAFTVVPKGLKGKAADGSEVELWGLWNRRQSTKFNGVSYIVQRGAEAVYSAEGQAQIKELVAFYLENARIIREELTAAGLDVHGGVNAPYVWVKTPAGLTSWDFFDKLLQVCNVVGTPGSGFGAAGEGYFRISAFNSRENVVTAMQRIRSAGLA</sequence>
<protein>
    <recommendedName>
        <fullName evidence="1">LL-diaminopimelate aminotransferase</fullName>
        <shortName evidence="1">DAP-AT</shortName>
        <shortName evidence="1">DAP-aminotransferase</shortName>
        <shortName evidence="1">LL-DAP-aminotransferase</shortName>
        <ecNumber evidence="1">2.6.1.83</ecNumber>
    </recommendedName>
</protein>